<gene>
    <name evidence="31" type="primary">Adcy8</name>
</gene>
<feature type="chain" id="PRO_0000195707" description="Adenylate cyclase type 8">
    <location>
        <begin position="1"/>
        <end position="1248"/>
    </location>
</feature>
<feature type="topological domain" description="Cytoplasmic" evidence="5">
    <location>
        <begin position="1"/>
        <end position="179"/>
    </location>
</feature>
<feature type="transmembrane region" description="Helical" evidence="5">
    <location>
        <begin position="180"/>
        <end position="200"/>
    </location>
</feature>
<feature type="transmembrane region" description="Helical" evidence="5">
    <location>
        <begin position="209"/>
        <end position="229"/>
    </location>
</feature>
<feature type="transmembrane region" description="Helical" evidence="5">
    <location>
        <begin position="244"/>
        <end position="264"/>
    </location>
</feature>
<feature type="transmembrane region" description="Helical" evidence="5">
    <location>
        <begin position="271"/>
        <end position="291"/>
    </location>
</feature>
<feature type="transmembrane region" description="Helical" evidence="5">
    <location>
        <begin position="293"/>
        <end position="313"/>
    </location>
</feature>
<feature type="transmembrane region" description="Helical" evidence="5">
    <location>
        <begin position="318"/>
        <end position="338"/>
    </location>
</feature>
<feature type="topological domain" description="Cytoplasmic" evidence="5">
    <location>
        <begin position="339"/>
        <end position="712"/>
    </location>
</feature>
<feature type="transmembrane region" description="Helical" evidence="5">
    <location>
        <begin position="713"/>
        <end position="733"/>
    </location>
</feature>
<feature type="transmembrane region" description="Helical" evidence="5">
    <location>
        <begin position="735"/>
        <end position="755"/>
    </location>
</feature>
<feature type="transmembrane region" description="Helical" evidence="5">
    <location>
        <begin position="784"/>
        <end position="804"/>
    </location>
</feature>
<feature type="transmembrane region" description="Helical" evidence="5">
    <location>
        <begin position="828"/>
        <end position="848"/>
    </location>
</feature>
<feature type="transmembrane region" description="Helical" evidence="5">
    <location>
        <begin position="858"/>
        <end position="878"/>
    </location>
</feature>
<feature type="transmembrane region" description="Helical" evidence="5">
    <location>
        <begin position="891"/>
        <end position="911"/>
    </location>
</feature>
<feature type="topological domain" description="Cytoplasmic" evidence="5">
    <location>
        <begin position="912"/>
        <end position="1248"/>
    </location>
</feature>
<feature type="region of interest" description="Involved in ORAI1, STIM1, PPP2CA and PPP2R1A interaction" evidence="12 21 22">
    <location>
        <begin position="1"/>
        <end position="179"/>
    </location>
</feature>
<feature type="region of interest" description="Involved in AKAP5 and PRKAR2A interaction" evidence="22">
    <location>
        <begin position="1"/>
        <end position="106"/>
    </location>
</feature>
<feature type="region of interest" description="Disordered" evidence="7">
    <location>
        <begin position="51"/>
        <end position="117"/>
    </location>
</feature>
<feature type="region of interest" description="Involved in CALM1 interaction" evidence="12">
    <location>
        <begin position="1106"/>
        <end position="1248"/>
    </location>
</feature>
<feature type="region of interest" description="Required for both calcium stimulation and maintenance of autoinhibition" evidence="16">
    <location>
        <begin position="1197"/>
        <end position="1212"/>
    </location>
</feature>
<feature type="region of interest" description="Disordered" evidence="7">
    <location>
        <begin position="1220"/>
        <end position="1248"/>
    </location>
</feature>
<feature type="short sequence motif" description="Essential for CALM1 interaction" evidence="12">
    <location>
        <begin position="38"/>
        <end position="40"/>
    </location>
</feature>
<feature type="short sequence motif" description="Essential for CALM1 interaction" evidence="12">
    <location>
        <begin position="49"/>
        <end position="51"/>
    </location>
</feature>
<feature type="binding site" evidence="2">
    <location>
        <begin position="416"/>
        <end position="421"/>
    </location>
    <ligand>
        <name>ATP</name>
        <dbReference type="ChEBI" id="CHEBI:30616"/>
    </ligand>
</feature>
<feature type="binding site" evidence="6">
    <location>
        <position position="416"/>
    </location>
    <ligand>
        <name>Mg(2+)</name>
        <dbReference type="ChEBI" id="CHEBI:18420"/>
        <label>1</label>
        <note>catalytic</note>
    </ligand>
</feature>
<feature type="binding site" evidence="6">
    <location>
        <position position="416"/>
    </location>
    <ligand>
        <name>Mg(2+)</name>
        <dbReference type="ChEBI" id="CHEBI:18420"/>
        <label>2</label>
        <note>catalytic</note>
    </ligand>
</feature>
<feature type="binding site" evidence="6">
    <location>
        <position position="417"/>
    </location>
    <ligand>
        <name>Mg(2+)</name>
        <dbReference type="ChEBI" id="CHEBI:18420"/>
        <label>2</label>
        <note>catalytic</note>
    </ligand>
</feature>
<feature type="binding site" evidence="2">
    <location>
        <begin position="458"/>
        <end position="460"/>
    </location>
    <ligand>
        <name>ATP</name>
        <dbReference type="ChEBI" id="CHEBI:30616"/>
    </ligand>
</feature>
<feature type="binding site" evidence="6">
    <location>
        <position position="460"/>
    </location>
    <ligand>
        <name>Mg(2+)</name>
        <dbReference type="ChEBI" id="CHEBI:18420"/>
        <label>1</label>
        <note>catalytic</note>
    </ligand>
</feature>
<feature type="binding site" evidence="6">
    <location>
        <position position="460"/>
    </location>
    <ligand>
        <name>Mg(2+)</name>
        <dbReference type="ChEBI" id="CHEBI:18420"/>
        <label>2</label>
        <note>catalytic</note>
    </ligand>
</feature>
<feature type="binding site" evidence="2">
    <location>
        <position position="504"/>
    </location>
    <ligand>
        <name>ATP</name>
        <dbReference type="ChEBI" id="CHEBI:30616"/>
    </ligand>
</feature>
<feature type="binding site" evidence="1">
    <location>
        <position position="1031"/>
    </location>
    <ligand>
        <name>ATP</name>
        <dbReference type="ChEBI" id="CHEBI:30616"/>
    </ligand>
</feature>
<feature type="binding site" evidence="1">
    <location>
        <begin position="1106"/>
        <end position="1108"/>
    </location>
    <ligand>
        <name>ATP</name>
        <dbReference type="ChEBI" id="CHEBI:30616"/>
    </ligand>
</feature>
<feature type="binding site" evidence="1">
    <location>
        <begin position="1113"/>
        <end position="1117"/>
    </location>
    <ligand>
        <name>ATP</name>
        <dbReference type="ChEBI" id="CHEBI:30616"/>
    </ligand>
</feature>
<feature type="binding site" evidence="1">
    <location>
        <position position="1153"/>
    </location>
    <ligand>
        <name>ATP</name>
        <dbReference type="ChEBI" id="CHEBI:30616"/>
    </ligand>
</feature>
<feature type="site" description="Essential for autoinhibition maintenance by promoting interaction of the N and C termini" evidence="16">
    <location>
        <position position="1196"/>
    </location>
</feature>
<feature type="site" description="Essential for autoinhibition maintenance" evidence="16">
    <location>
        <position position="1197"/>
    </location>
</feature>
<feature type="site" description="Essential for autoinhibition maintenance by promoting interaction of the N and C termini" evidence="16">
    <location>
        <position position="1200"/>
    </location>
</feature>
<feature type="site" description="Essential for CALM1 interaction" evidence="16">
    <location>
        <position position="1202"/>
    </location>
</feature>
<feature type="site" description="Essential for CALM1 interaction" evidence="16">
    <location>
        <position position="1204"/>
    </location>
</feature>
<feature type="modified residue" description="Omega-N-methylarginine" evidence="4">
    <location>
        <position position="55"/>
    </location>
</feature>
<feature type="modified residue" description="Phosphoserine" evidence="4">
    <location>
        <position position="611"/>
    </location>
</feature>
<feature type="modified residue" description="Phosphoserine" evidence="32">
    <location>
        <position position="621"/>
    </location>
</feature>
<feature type="glycosylation site" description="N-linked (GlcNAc...) asparagine" evidence="5">
    <location>
        <position position="814"/>
    </location>
</feature>
<feature type="glycosylation site" description="N-linked (GlcNAc...) asparagine" evidence="5">
    <location>
        <position position="818"/>
    </location>
</feature>
<feature type="glycosylation site" description="N-linked (GlcNAc...) asparagine" evidence="5">
    <location>
        <position position="885"/>
    </location>
</feature>
<feature type="splice variant" id="VSP_059986" description="In isoform 3 and isoform 4." evidence="10 26">
    <location>
        <begin position="635"/>
        <end position="700"/>
    </location>
</feature>
<feature type="splice variant" id="VSP_059987" description="In isoform 2 and isoform 4." evidence="10 26">
    <location>
        <begin position="802"/>
        <end position="831"/>
    </location>
</feature>
<feature type="mutagenesis site" description="Does not affect adenylate cyclase activity in response to calcium in vitro. Reduces adenylate cyclase activity in response to capacitative calcium entry (CCE). Reduces colocalization with actin. Does not improve the distribution of the actin cytoskeleton at the plasma membrane." evidence="20">
    <location>
        <begin position="1"/>
        <end position="106"/>
    </location>
</feature>
<feature type="mutagenesis site" description="Does not interact with CALM1; when associated with 49-A--A-51. Interacts with PPP2CA; when associated with 49-A--A-51. Greatly reduces CCE-stimulated adenylate cyclase activity; when associated with 49-A--A-51. Does not affect caveolar localization; when associated with 49-A--A-51. Does not affect calcium/calmodulin stimulated adenylate cyclase activity; when associated with 49-A--A-51. Decreases calcium/calmodulin stimulated adenylate cyclase activity; when associated with 49-A--A-51; A-1197; A-1198 and A-1202." evidence="8 12 16">
    <original>WQT</original>
    <variation>AAA</variation>
    <location>
        <begin position="38"/>
        <end position="40"/>
    </location>
</feature>
<feature type="mutagenesis site" description="Does not interact with CALM1; when associated with 38-A--A-40. Interacts with PPP2CA; when associated with 38-A--A-40. Greatly reduces CCE-stimulated adenylate cyclase activity; when associated with 38-A--A-40. Does not affect caveolar localization; when associated with 38-A--A-40. Does not affect calcium/calmodulin stimulated adenylate cyclase activity; when associated with 38-A--A-40. Decreases calcium/calmodulin stimulated adenylate cyclase activity; when associated with 38-A--A-40; A-1197; A-1198 and A-1202." evidence="8 12 16">
    <original>RFI</original>
    <variation>AAA</variation>
    <location>
        <begin position="49"/>
        <end position="51"/>
    </location>
</feature>
<feature type="mutagenesis site" description="Decraeses significantly the stimulatoty effect of PKA inhibitor on calcium-stimulated adenylate cyclase activity." evidence="22">
    <original>S</original>
    <variation>A</variation>
    <location>
        <position position="66"/>
    </location>
</feature>
<feature type="mutagenesis site" description="Loses the stimulatoty effect of PKA inhibitor on calcium-stimulated adenylate cyclase activity." evidence="22">
    <original>S</original>
    <variation>A</variation>
    <location>
        <position position="112"/>
    </location>
</feature>
<feature type="mutagenesis site" description="Insensitive to the stimulatory effect of PKA inhibitor on calcium-stimulated adenylate cyclase activity." evidence="22">
    <original>S</original>
    <variation>D</variation>
    <location>
        <position position="112"/>
    </location>
</feature>
<feature type="mutagenesis site" description="Does not affect the stimulatoty effect of PKA inhibitor on calcium-stimulated adenylate cyclase activity." evidence="22">
    <original>S</original>
    <variation>A</variation>
    <location>
        <position position="178"/>
    </location>
</feature>
<feature type="mutagenesis site" description="Loses adenylate cyclase activity in response to calcium." evidence="20">
    <original>D</original>
    <variation>N</variation>
    <location>
        <position position="416"/>
    </location>
</feature>
<feature type="mutagenesis site" description="Does not affect dimerization; when associated with A-439. Dramatically reduces the levels of the N-glycosylated monomeric species; when associated with A-439. Loss of calcium- and calmodulin-responsive adenylate cyclase activity; when associated with A-439. Affects membrane raft localization; when associated with A-439." evidence="14">
    <original>L</original>
    <variation>A</variation>
    <location>
        <position position="432"/>
    </location>
</feature>
<feature type="mutagenesis site" description="Does not affect dimerization. Does not affect dimerization;when associated with A-432. Does not affect dimerization;when associated with A-446 and A-432. Does not affect dimerization;when associated with A-432; A-446 and A-453. Dramatically reduces the levels of the N-glycosylated monomeric species. Dramatically reduces the levels of the N-glycosylated monomeric species; when associated with A-432. Dramatically reduces the levels of the N-glycosylated monomeric species; when associated with A-446 and A-432. Dramatically reduces the levels of the N-glycosylated monomeric species; when associated with A-453; A-432 and A-446. Loss of calcium- and calmodulin-responsive adenylate cyclase activity. Loss of calcium- and calmodulin-responsive adenylate cyclase activity; when associated with A-432. Loss of calcium- and calmodulin-responsive adenylate cyclase activity; when associated with A-446 and A-432. Loss of calcium- and calmodulin-responsive adenylate cyclase activity; when associated with A-453; A-432 and A-446. Affects membrane raft localization. Affects membrane raft localization; when associated with A-432. Affects membrane raft localization; when associated with A-446 and A-432. Affects membrane raft localization; when associated with A-439; A-432 and A-446." evidence="14">
    <original>L</original>
    <variation>A</variation>
    <location>
        <position position="439"/>
    </location>
</feature>
<feature type="mutagenesis site" description="Does not affect dimerization; when associated with A-439 and A-432. Dramatically reduces the levels of the N-glycosylated monomeric species; when associated with A-439 and A-432. Loss of calcium- and calmodulin-responsive adenylate cyclase activity; when associated with A-439 and A-432. Affects membrane raft localization; when associated with A-439 and A-432." evidence="14">
    <original>L</original>
    <variation>A</variation>
    <location>
        <position position="446"/>
    </location>
</feature>
<feature type="mutagenesis site" description="Does not affect dimerization; when associated with A-439; A-432 and A-446. Dramatically reduces the levels of the N-glycosylated monomeric species; when associated with A-439; A-432 and A-446. Loss of calcium- and calmodulin-responsive adenylate cyclase activity; when associated with A-439; A-432 and A-446. Affects membrane raft localization; when associated with A-439; A-432 and A-446." evidence="14">
    <original>L</original>
    <variation>A</variation>
    <location>
        <position position="453"/>
    </location>
</feature>
<feature type="mutagenesis site" description="Does not affect the stimulatoty effect of PKA inhibitoron calcium-stimulated adenylate cyclase activity." evidence="22">
    <original>S</original>
    <variation>A</variation>
    <location>
        <position position="611"/>
    </location>
</feature>
<feature type="mutagenesis site" description="Does not affect deglycosylation. Does not affect plasma membrane targeting; when associated with Q-818 and A-885. Affects membrane raft localization; when associated with Q-818 and A-885. Does not affect CCE-stimulated adenylate cyclase activity; when associated with Q-818 and A-885." evidence="14">
    <original>N</original>
    <variation>Q</variation>
    <location>
        <position position="814"/>
    </location>
</feature>
<feature type="mutagenesis site" description="Does not affect deglycosylation. Does not affect plasma membrane targeting; when associated with Q-814 and A-885. Affects membrane raft localization; when associated with Q-814 and A-885. Does not affect CCE-stimulated adenylate cyclase activity; when associated with Q-814 and A-885." evidence="14">
    <original>N</original>
    <variation>Q</variation>
    <location>
        <position position="818"/>
    </location>
</feature>
<feature type="mutagenesis site" description="Does not affect the stimulatoty effect of PKA inhibitoron calcium-stimulated adenylate cyclase activity." evidence="22">
    <original>S</original>
    <variation>A</variation>
    <location>
        <position position="852"/>
    </location>
</feature>
<feature type="mutagenesis site" description="Does not affect deglycosylation. Does not affect plasma membrane targeting; when associated with Q-814 and A-818. Affects membrane raft localization; when associated with Q-814 and A-818. Does not affect CCE-stimulated adenylate cyclase activity; when associated with Q-814 and A-818." evidence="14">
    <original>N</original>
    <variation>E</variation>
    <location>
        <position position="885"/>
    </location>
</feature>
<feature type="mutagenesis site" description="Does not affect the stimulatoty effect of PKA inhibitor on calcium-stimulated adenylate cyclase activity." evidence="22">
    <original>S</original>
    <variation>A</variation>
    <location>
        <position position="1120"/>
    </location>
</feature>
<feature type="mutagenesis site" description="Consistently high basal adenylate cyclase activity; when associated with A-1200. Does not affect calmodulin binding; when associated with A-1200." evidence="16">
    <original>L</original>
    <variation>A</variation>
    <location>
        <position position="1196"/>
    </location>
</feature>
<feature type="mutagenesis site" description="Does not affect calcium activated adenylate cyclase; when associated with A-1198. Does not affect calcium activated adenylate cyclase; when associated with A-1198 and A-1202. Decreases calcium/calmodulin stimulated adenylate cyclase activity; when associated with 49-A--A-51; 38-A--A-40; A-1198 and A-1202. Has an elevated basal activity; when associated with A-1198. Has an elevated basal activity; when associated with A-1198 and A-1202. Does not affect calmodulin binding; when associated with A-1198. Does not affect calmodulin binding; when associated with A-1198 and A-1202." evidence="16">
    <original>V</original>
    <variation>A</variation>
    <location>
        <position position="1197"/>
    </location>
</feature>
<feature type="mutagenesis site" description="Does not affect calcium activated adenylate cyclase. Significant high basal adenylate cyclase activity. Significant high basal adenylate cyclase activity; when associated with Q-1202." evidence="16">
    <original>V</original>
    <variation>N</variation>
    <location>
        <position position="1197"/>
    </location>
</feature>
<feature type="mutagenesis site" description="Does not affect calcium activated adenylate cyclase; when associated with A-1197. Does not affect calcium activated adenylate cyclase; when associated with A-1197 and A-1202. Decreases calcium/calmodulin stimulated adenylate cyclase activity; when associated with 49-A--A-51; 38-A--A-40; A-1197 and A-1202. Has an elevated basal activity; when associated with A-1197. Has an elevated basal activity; when associated with A-1197 and A-1202. Does not affect calmodulin binding; when associated with A-1197. Does not affect calmodulin binding; when associated with A-1197 and A-1202." evidence="16">
    <original>Q</original>
    <variation>A</variation>
    <location>
        <position position="1198"/>
    </location>
</feature>
<feature type="mutagenesis site" description="Does not affect calcium activated adenylate cyclase." evidence="16">
    <original>Q</original>
    <variation>K</variation>
    <location>
        <position position="1198"/>
    </location>
</feature>
<feature type="mutagenesis site" description="Increased CCE-stimulated adenylate cyclase activity. Has a high basal activity." evidence="16">
    <original>S</original>
    <variation>D</variation>
    <location>
        <position position="1199"/>
    </location>
</feature>
<feature type="mutagenesis site" description="Consistently high basal adenylate cyclase activity; when associated with A-1196. Does not affect calmodulin binding; when associated with A-1196." evidence="16">
    <original>L</original>
    <variation>A</variation>
    <location>
        <position position="1200"/>
    </location>
</feature>
<feature type="mutagenesis site" description="Does not affect calcium activated adenylate cyclase; when associated with A-1197 and A-1198. Decreases calcium/calmodulin stimulated adenylate cyclase activity; when associated with 49-A--A-51; 38-A--A-40; A-1197 and A-1198. Has an elevated basal activity; when associated with A-1197 and A-1198. Does not affect calmodulin binding; when associated with A-1197 and A-1198." evidence="16">
    <original>R</original>
    <variation>A</variation>
    <location>
        <position position="1202"/>
    </location>
</feature>
<feature type="mutagenesis site" description="Does not affect calcium activated adenylate cyclase; when associated with E-1204. Greatly diminishes calmodulin binding; when associated with E-1204." evidence="16">
    <original>R</original>
    <variation>E</variation>
    <location>
        <position position="1202"/>
    </location>
</feature>
<feature type="mutagenesis site" description="Does not affect calcium activated adenylate cyclase. Increases slightly basal adenylate cyclase activity but not significantly, and retains an appreciable calcium regulation. Significant high basal adenylate cyclase activity; when associated with N-1197." evidence="16">
    <original>R</original>
    <variation>Q</variation>
    <location>
        <position position="1202"/>
    </location>
</feature>
<feature type="mutagenesis site" description="Does not affect calcium activated adenylate cyclase; when associated with E-1202. Greatly diminishes calmodulin binding; when associated with E-1202." evidence="16">
    <original>R</original>
    <variation>E</variation>
    <location>
        <position position="1204"/>
    </location>
</feature>
<feature type="mutagenesis site" description="Does not affect calcium activated adenylate cyclase. Does not affect calmodulin binding." evidence="16">
    <original>K</original>
    <variation>E</variation>
    <location>
        <position position="1206"/>
    </location>
</feature>
<feature type="mutagenesis site" description="Does not affect calcium activated adenylate cyclase; when associated with E-1209. Does not affect calmodulin binding; when associated with E-1209." evidence="16">
    <original>L</original>
    <variation>E</variation>
    <location>
        <position position="1208"/>
    </location>
</feature>
<feature type="mutagenesis site" description="Does not affect calcium activated adenylate cyclase; when associated with E-1208. Does not affect calmodulin binding; when associated with E-1208." evidence="16">
    <original>L</original>
    <variation>E</variation>
    <location>
        <position position="1209"/>
    </location>
</feature>
<dbReference type="EC" id="4.6.1.1" evidence="25 26"/>
<dbReference type="EMBL" id="L26986">
    <property type="protein sequence ID" value="AAA20504.1"/>
    <property type="molecule type" value="mRNA"/>
</dbReference>
<dbReference type="PIR" id="A53588">
    <property type="entry name" value="A53588"/>
</dbReference>
<dbReference type="RefSeq" id="NP_058838.1">
    <molecule id="P40146-1"/>
    <property type="nucleotide sequence ID" value="NM_017142.1"/>
</dbReference>
<dbReference type="SMR" id="P40146"/>
<dbReference type="FunCoup" id="P40146">
    <property type="interactions" value="1233"/>
</dbReference>
<dbReference type="STRING" id="10116.ENSRNOP00000006789"/>
<dbReference type="BindingDB" id="P40146"/>
<dbReference type="ChEMBL" id="CHEMBL2095179"/>
<dbReference type="DrugCentral" id="P40146"/>
<dbReference type="GlyCosmos" id="P40146">
    <property type="glycosylation" value="3 sites, No reported glycans"/>
</dbReference>
<dbReference type="GlyGen" id="P40146">
    <property type="glycosylation" value="4 sites"/>
</dbReference>
<dbReference type="iPTMnet" id="P40146"/>
<dbReference type="PhosphoSitePlus" id="P40146"/>
<dbReference type="PaxDb" id="10116-ENSRNOP00000006789"/>
<dbReference type="GeneID" id="29241"/>
<dbReference type="KEGG" id="rno:29241"/>
<dbReference type="UCSC" id="RGD:2036">
    <molecule id="P40146-1"/>
    <property type="organism name" value="rat"/>
</dbReference>
<dbReference type="AGR" id="RGD:2036"/>
<dbReference type="CTD" id="114"/>
<dbReference type="RGD" id="2036">
    <property type="gene designation" value="Adcy8"/>
</dbReference>
<dbReference type="eggNOG" id="KOG3619">
    <property type="taxonomic scope" value="Eukaryota"/>
</dbReference>
<dbReference type="InParanoid" id="P40146"/>
<dbReference type="OrthoDB" id="41581at9989"/>
<dbReference type="PhylomeDB" id="P40146"/>
<dbReference type="BRENDA" id="4.6.1.1">
    <property type="organism ID" value="5301"/>
</dbReference>
<dbReference type="Reactome" id="R-RNO-163615">
    <property type="pathway name" value="PKA activation"/>
</dbReference>
<dbReference type="Reactome" id="R-RNO-170660">
    <property type="pathway name" value="Adenylate cyclase activating pathway"/>
</dbReference>
<dbReference type="Reactome" id="R-RNO-170670">
    <property type="pathway name" value="Adenylate cyclase inhibitory pathway"/>
</dbReference>
<dbReference type="Reactome" id="R-RNO-418597">
    <property type="pathway name" value="G alpha (z) signalling events"/>
</dbReference>
<dbReference type="Reactome" id="R-RNO-5610787">
    <property type="pathway name" value="Hedgehog 'off' state"/>
</dbReference>
<dbReference type="PRO" id="PR:P40146"/>
<dbReference type="Proteomes" id="UP000002494">
    <property type="component" value="Unplaced"/>
</dbReference>
<dbReference type="GO" id="GO:0016324">
    <property type="term" value="C:apical plasma membrane"/>
    <property type="evidence" value="ECO:0000250"/>
    <property type="project" value="UniProtKB"/>
</dbReference>
<dbReference type="GO" id="GO:0030424">
    <property type="term" value="C:axon"/>
    <property type="evidence" value="ECO:0000250"/>
    <property type="project" value="UniProtKB"/>
</dbReference>
<dbReference type="GO" id="GO:0016323">
    <property type="term" value="C:basolateral plasma membrane"/>
    <property type="evidence" value="ECO:0000250"/>
    <property type="project" value="UniProtKB"/>
</dbReference>
<dbReference type="GO" id="GO:0005901">
    <property type="term" value="C:caveola"/>
    <property type="evidence" value="ECO:0000314"/>
    <property type="project" value="UniProtKB"/>
</dbReference>
<dbReference type="GO" id="GO:0005905">
    <property type="term" value="C:clathrin-coated pit"/>
    <property type="evidence" value="ECO:0000314"/>
    <property type="project" value="UniProtKB"/>
</dbReference>
<dbReference type="GO" id="GO:0030665">
    <property type="term" value="C:clathrin-coated vesicle membrane"/>
    <property type="evidence" value="ECO:0007669"/>
    <property type="project" value="UniProtKB-SubCell"/>
</dbReference>
<dbReference type="GO" id="GO:0030425">
    <property type="term" value="C:dendrite"/>
    <property type="evidence" value="ECO:0000314"/>
    <property type="project" value="UniProtKB"/>
</dbReference>
<dbReference type="GO" id="GO:0060076">
    <property type="term" value="C:excitatory synapse"/>
    <property type="evidence" value="ECO:0000250"/>
    <property type="project" value="UniProtKB"/>
</dbReference>
<dbReference type="GO" id="GO:0098978">
    <property type="term" value="C:glutamatergic synapse"/>
    <property type="evidence" value="ECO:0000266"/>
    <property type="project" value="RGD"/>
</dbReference>
<dbReference type="GO" id="GO:0098686">
    <property type="term" value="C:hippocampal mossy fiber to CA3 synapse"/>
    <property type="evidence" value="ECO:0000266"/>
    <property type="project" value="RGD"/>
</dbReference>
<dbReference type="GO" id="GO:0045121">
    <property type="term" value="C:membrane raft"/>
    <property type="evidence" value="ECO:0000314"/>
    <property type="project" value="UniProtKB"/>
</dbReference>
<dbReference type="GO" id="GO:0032809">
    <property type="term" value="C:neuronal cell body membrane"/>
    <property type="evidence" value="ECO:0000314"/>
    <property type="project" value="UniProtKB"/>
</dbReference>
<dbReference type="GO" id="GO:0005886">
    <property type="term" value="C:plasma membrane"/>
    <property type="evidence" value="ECO:0000314"/>
    <property type="project" value="UniProtKB"/>
</dbReference>
<dbReference type="GO" id="GO:0044853">
    <property type="term" value="C:plasma membrane raft"/>
    <property type="evidence" value="ECO:0000314"/>
    <property type="project" value="UniProtKB"/>
</dbReference>
<dbReference type="GO" id="GO:0014069">
    <property type="term" value="C:postsynaptic density"/>
    <property type="evidence" value="ECO:0000250"/>
    <property type="project" value="UniProtKB"/>
</dbReference>
<dbReference type="GO" id="GO:0048786">
    <property type="term" value="C:presynaptic active zone"/>
    <property type="evidence" value="ECO:0000250"/>
    <property type="project" value="UniProtKB"/>
</dbReference>
<dbReference type="GO" id="GO:0042734">
    <property type="term" value="C:presynaptic membrane"/>
    <property type="evidence" value="ECO:0000266"/>
    <property type="project" value="RGD"/>
</dbReference>
<dbReference type="GO" id="GO:0098685">
    <property type="term" value="C:Schaffer collateral - CA1 synapse"/>
    <property type="evidence" value="ECO:0000266"/>
    <property type="project" value="RGD"/>
</dbReference>
<dbReference type="GO" id="GO:0003779">
    <property type="term" value="F:actin binding"/>
    <property type="evidence" value="ECO:0000314"/>
    <property type="project" value="UniProtKB"/>
</dbReference>
<dbReference type="GO" id="GO:0004016">
    <property type="term" value="F:adenylate cyclase activity"/>
    <property type="evidence" value="ECO:0000266"/>
    <property type="project" value="RGD"/>
</dbReference>
<dbReference type="GO" id="GO:0005524">
    <property type="term" value="F:ATP binding"/>
    <property type="evidence" value="ECO:0007669"/>
    <property type="project" value="UniProtKB-KW"/>
</dbReference>
<dbReference type="GO" id="GO:0008294">
    <property type="term" value="F:calcium- and calmodulin-responsive adenylate cyclase activity"/>
    <property type="evidence" value="ECO:0000314"/>
    <property type="project" value="UniProtKB"/>
</dbReference>
<dbReference type="GO" id="GO:0005516">
    <property type="term" value="F:calmodulin binding"/>
    <property type="evidence" value="ECO:0000314"/>
    <property type="project" value="UniProtKB"/>
</dbReference>
<dbReference type="GO" id="GO:0046872">
    <property type="term" value="F:metal ion binding"/>
    <property type="evidence" value="ECO:0007669"/>
    <property type="project" value="UniProtKB-KW"/>
</dbReference>
<dbReference type="GO" id="GO:0019902">
    <property type="term" value="F:phosphatase binding"/>
    <property type="evidence" value="ECO:0000353"/>
    <property type="project" value="UniProtKB"/>
</dbReference>
<dbReference type="GO" id="GO:0046983">
    <property type="term" value="F:protein dimerization activity"/>
    <property type="evidence" value="ECO:0000314"/>
    <property type="project" value="UniProtKB"/>
</dbReference>
<dbReference type="GO" id="GO:0046982">
    <property type="term" value="F:protein heterodimerization activity"/>
    <property type="evidence" value="ECO:0000315"/>
    <property type="project" value="UniProtKB"/>
</dbReference>
<dbReference type="GO" id="GO:0042803">
    <property type="term" value="F:protein homodimerization activity"/>
    <property type="evidence" value="ECO:0000314"/>
    <property type="project" value="UniProtKB"/>
</dbReference>
<dbReference type="GO" id="GO:0051721">
    <property type="term" value="F:protein phosphatase 2A binding"/>
    <property type="evidence" value="ECO:0000314"/>
    <property type="project" value="UniProtKB"/>
</dbReference>
<dbReference type="GO" id="GO:0034199">
    <property type="term" value="P:activation of protein kinase A activity"/>
    <property type="evidence" value="ECO:0000315"/>
    <property type="project" value="UniProtKB"/>
</dbReference>
<dbReference type="GO" id="GO:0007189">
    <property type="term" value="P:adenylate cyclase-activating G protein-coupled receptor signaling pathway"/>
    <property type="evidence" value="ECO:0000315"/>
    <property type="project" value="WormBase"/>
</dbReference>
<dbReference type="GO" id="GO:0006171">
    <property type="term" value="P:cAMP biosynthetic process"/>
    <property type="evidence" value="ECO:0000315"/>
    <property type="project" value="RGD"/>
</dbReference>
<dbReference type="GO" id="GO:0141156">
    <property type="term" value="P:cAMP/PKA signal transduction"/>
    <property type="evidence" value="ECO:0000314"/>
    <property type="project" value="RGD"/>
</dbReference>
<dbReference type="GO" id="GO:0071277">
    <property type="term" value="P:cellular response to calcium ion"/>
    <property type="evidence" value="ECO:0000314"/>
    <property type="project" value="UniProtKB"/>
</dbReference>
<dbReference type="GO" id="GO:1904322">
    <property type="term" value="P:cellular response to forskolin"/>
    <property type="evidence" value="ECO:0000314"/>
    <property type="project" value="UniProtKB"/>
</dbReference>
<dbReference type="GO" id="GO:0071377">
    <property type="term" value="P:cellular response to glucagon stimulus"/>
    <property type="evidence" value="ECO:0000315"/>
    <property type="project" value="UniProtKB"/>
</dbReference>
<dbReference type="GO" id="GO:0071333">
    <property type="term" value="P:cellular response to glucose stimulus"/>
    <property type="evidence" value="ECO:0000314"/>
    <property type="project" value="UniProtKB"/>
</dbReference>
<dbReference type="GO" id="GO:0071315">
    <property type="term" value="P:cellular response to morphine"/>
    <property type="evidence" value="ECO:0000314"/>
    <property type="project" value="UniProtKB"/>
</dbReference>
<dbReference type="GO" id="GO:0038003">
    <property type="term" value="P:G protein-coupled opioid receptor signaling pathway"/>
    <property type="evidence" value="ECO:0000314"/>
    <property type="project" value="UniProtKB"/>
</dbReference>
<dbReference type="GO" id="GO:0042593">
    <property type="term" value="P:glucose homeostasis"/>
    <property type="evidence" value="ECO:0000250"/>
    <property type="project" value="UniProtKB"/>
</dbReference>
<dbReference type="GO" id="GO:0010255">
    <property type="term" value="P:glucose mediated signaling pathway"/>
    <property type="evidence" value="ECO:0000314"/>
    <property type="project" value="UniProtKB"/>
</dbReference>
<dbReference type="GO" id="GO:0007626">
    <property type="term" value="P:locomotory behavior"/>
    <property type="evidence" value="ECO:0000250"/>
    <property type="project" value="UniProtKB"/>
</dbReference>
<dbReference type="GO" id="GO:0007616">
    <property type="term" value="P:long-term memory"/>
    <property type="evidence" value="ECO:0000266"/>
    <property type="project" value="RGD"/>
</dbReference>
<dbReference type="GO" id="GO:0007613">
    <property type="term" value="P:memory"/>
    <property type="evidence" value="ECO:0000250"/>
    <property type="project" value="UniProtKB"/>
</dbReference>
<dbReference type="GO" id="GO:0050804">
    <property type="term" value="P:modulation of chemical synaptic transmission"/>
    <property type="evidence" value="ECO:0000266"/>
    <property type="project" value="RGD"/>
</dbReference>
<dbReference type="GO" id="GO:0150076">
    <property type="term" value="P:neuroinflammatory response"/>
    <property type="evidence" value="ECO:0000250"/>
    <property type="project" value="UniProtKB"/>
</dbReference>
<dbReference type="GO" id="GO:0032793">
    <property type="term" value="P:positive regulation of CREB transcription factor activity"/>
    <property type="evidence" value="ECO:0000250"/>
    <property type="project" value="UniProtKB"/>
</dbReference>
<dbReference type="GO" id="GO:0007204">
    <property type="term" value="P:positive regulation of cytosolic calcium ion concentration"/>
    <property type="evidence" value="ECO:0000315"/>
    <property type="project" value="UniProtKB"/>
</dbReference>
<dbReference type="GO" id="GO:0032024">
    <property type="term" value="P:positive regulation of insulin secretion"/>
    <property type="evidence" value="ECO:0000266"/>
    <property type="project" value="RGD"/>
</dbReference>
<dbReference type="GO" id="GO:0035774">
    <property type="term" value="P:positive regulation of insulin secretion involved in cellular response to glucose stimulus"/>
    <property type="evidence" value="ECO:0000315"/>
    <property type="project" value="UniProtKB"/>
</dbReference>
<dbReference type="GO" id="GO:1900454">
    <property type="term" value="P:positive regulation of long-term synaptic depression"/>
    <property type="evidence" value="ECO:0000250"/>
    <property type="project" value="UniProtKB"/>
</dbReference>
<dbReference type="GO" id="GO:1900273">
    <property type="term" value="P:positive regulation of long-term synaptic potentiation"/>
    <property type="evidence" value="ECO:0000250"/>
    <property type="project" value="UniProtKB"/>
</dbReference>
<dbReference type="GO" id="GO:0031915">
    <property type="term" value="P:positive regulation of synaptic plasticity"/>
    <property type="evidence" value="ECO:0000250"/>
    <property type="project" value="UniProtKB"/>
</dbReference>
<dbReference type="GO" id="GO:0051259">
    <property type="term" value="P:protein complex oligomerization"/>
    <property type="evidence" value="ECO:0000314"/>
    <property type="project" value="UniProtKB"/>
</dbReference>
<dbReference type="GO" id="GO:0051260">
    <property type="term" value="P:protein homooligomerization"/>
    <property type="evidence" value="ECO:0000315"/>
    <property type="project" value="UniProtKB"/>
</dbReference>
<dbReference type="GO" id="GO:0080135">
    <property type="term" value="P:regulation of cellular response to stress"/>
    <property type="evidence" value="ECO:0000250"/>
    <property type="project" value="UniProtKB"/>
</dbReference>
<dbReference type="GO" id="GO:0051480">
    <property type="term" value="P:regulation of cytosolic calcium ion concentration"/>
    <property type="evidence" value="ECO:0000250"/>
    <property type="project" value="UniProtKB"/>
</dbReference>
<dbReference type="CDD" id="cd07302">
    <property type="entry name" value="CHD"/>
    <property type="match status" value="2"/>
</dbReference>
<dbReference type="FunFam" id="3.30.70.1230:FF:000001">
    <property type="entry name" value="Adenylate cyclase"/>
    <property type="match status" value="1"/>
</dbReference>
<dbReference type="FunFam" id="3.30.70.1230:FF:000011">
    <property type="entry name" value="Adenylate cyclase"/>
    <property type="match status" value="1"/>
</dbReference>
<dbReference type="Gene3D" id="3.30.70.1230">
    <property type="entry name" value="Nucleotide cyclase"/>
    <property type="match status" value="2"/>
</dbReference>
<dbReference type="InterPro" id="IPR001054">
    <property type="entry name" value="A/G_cyclase"/>
</dbReference>
<dbReference type="InterPro" id="IPR018297">
    <property type="entry name" value="A/G_cyclase_CS"/>
</dbReference>
<dbReference type="InterPro" id="IPR032628">
    <property type="entry name" value="AC_N"/>
</dbReference>
<dbReference type="InterPro" id="IPR030672">
    <property type="entry name" value="Adcy"/>
</dbReference>
<dbReference type="InterPro" id="IPR009398">
    <property type="entry name" value="Adcy_conserved_dom"/>
</dbReference>
<dbReference type="InterPro" id="IPR029787">
    <property type="entry name" value="Nucleotide_cyclase"/>
</dbReference>
<dbReference type="PANTHER" id="PTHR45627">
    <property type="entry name" value="ADENYLATE CYCLASE TYPE 1"/>
    <property type="match status" value="1"/>
</dbReference>
<dbReference type="PANTHER" id="PTHR45627:SF1">
    <property type="entry name" value="ADENYLATE CYCLASE TYPE 8"/>
    <property type="match status" value="1"/>
</dbReference>
<dbReference type="Pfam" id="PF16214">
    <property type="entry name" value="AC_N"/>
    <property type="match status" value="1"/>
</dbReference>
<dbReference type="Pfam" id="PF06327">
    <property type="entry name" value="Adcy_cons_dom"/>
    <property type="match status" value="1"/>
</dbReference>
<dbReference type="Pfam" id="PF00211">
    <property type="entry name" value="Guanylate_cyc"/>
    <property type="match status" value="2"/>
</dbReference>
<dbReference type="PIRSF" id="PIRSF039050">
    <property type="entry name" value="Ade_cyc"/>
    <property type="match status" value="1"/>
</dbReference>
<dbReference type="SMART" id="SM00044">
    <property type="entry name" value="CYCc"/>
    <property type="match status" value="2"/>
</dbReference>
<dbReference type="SUPFAM" id="SSF55073">
    <property type="entry name" value="Nucleotide cyclase"/>
    <property type="match status" value="2"/>
</dbReference>
<dbReference type="PROSITE" id="PS00452">
    <property type="entry name" value="GUANYLATE_CYCLASE_1"/>
    <property type="match status" value="2"/>
</dbReference>
<dbReference type="PROSITE" id="PS50125">
    <property type="entry name" value="GUANYLATE_CYCLASE_2"/>
    <property type="match status" value="2"/>
</dbReference>
<proteinExistence type="evidence at protein level"/>
<protein>
    <recommendedName>
        <fullName evidence="30">Adenylate cyclase type 8</fullName>
        <ecNumber evidence="25 26">4.6.1.1</ecNumber>
    </recommendedName>
    <alternativeName>
        <fullName>ATP pyrophosphate-lyase 8</fullName>
    </alternativeName>
    <alternativeName>
        <fullName evidence="3">Adenylate cyclase type VIII</fullName>
    </alternativeName>
    <alternativeName>
        <fullName evidence="28">Adenylyl cyclase 8</fullName>
    </alternativeName>
    <alternativeName>
        <fullName>Ca(2+)/calmodulin-activated adenylyl cyclase</fullName>
    </alternativeName>
</protein>
<name>ADCY8_RAT</name>
<sequence>MELSDVHCLSGSEELYTIHPTPPAADGGSGSRPQRLLWQTAVRHITEQRFIHGHRGGGGGGSRKASNPAGSGPNHHAPQLSSDSVLPLYSLGSGERAHNTGGTKVFPERSGSGSASGSGGGGDLGFLHLDCAPSNSDFFLNGGYSYRGVIFPTLRNSFKSRDLERLYQRYFLGQRRKSEVVMNVLDVLTKLTLLVLHLSLASAPMDPLKGILLGFFTGIEVVICALVVVRKDTTSHTYLQYSGVVTWVAMTTQILAAGLGYGLLGDGIGYVLFTLFATYSMLPLPLTWAILAGLGTSLLQVTLQVLIPRLAVFSINQVLAQVVLFMCMNTAGIFISYLSDRAQRQAFLETRRCVEARLRLETENQRQERLVLSVLPRFVVLEMINDMTNVEDEHLQHQFHRIYIHRYENVSILFADVKGFTNLSTTLSAQELVRMLNELFARFDRLAHEHHCLRIKILGDCYYCVSGLPEPRQDHAHCCVEMGLSMIKTIRFVRSRTKHDVDMRIGIHSGSVLCGVLGLRKWQFDVWSWDVDIANKLESGGIPGRIHISKATLDCLSGDYNVEEGHGKERNEFLRKHNIETYLIKQPEESLLSLPEDIVKESVSCSDRRNSGATFTEGSWSPELPFDNIVGKQNTLAALTRNSINLLPNHLAQALHVQSGPEEINKRIEHTIDLRSGDKLRREHIKPFSLMFKDSSLEHKYSQMRDEVFKSNLVCAFIVLLFITAIQSLLPSSRLMPMTIQFSILIMLHSALVLITTAEDYKCLPLILRKTCCWINETYLARNVIIFASILINFLGAVINILWCDFDKSIPLKNLTFNSSAVFTDICSYPEYFVFTGVLAMVTCAVFLRLNSVLKLAVLLIMIAIYALLTETIYAGLFLSYDNLNHSGEDFLGTKEASLLLMAMFLLAVFYHGQQLEYTARLDFLWRVQAKEEINEMKDLREHNENMLRNILPGHVARHFLEKDRDNEELYSQSYDAVGVMFASIPGFADFYSQTEMNNQGVECLRLLNEIIADFDELLGEDRFQDIEKIKTIGSTYMAVSGLSPEKQQCEDKWGHLCALADFSLALTESIQEINKHSFNNFELRIGISHGSVVAGVIGAKKPQYDIWGKTVNLASRMDSTGVSGRIQVPEETYLILKDQGFAFDYRGEIYVKGISEQEGKIKTYFLLGRVQPNPFILPPRRLPGQYSLAAVVLGLVQSLNRQRQKQLLNENSNSGIIKSHYNRRTLLTPSGPEPGAQAEGTDKSDLP</sequence>
<organism>
    <name type="scientific">Rattus norvegicus</name>
    <name type="common">Rat</name>
    <dbReference type="NCBI Taxonomy" id="10116"/>
    <lineage>
        <taxon>Eukaryota</taxon>
        <taxon>Metazoa</taxon>
        <taxon>Chordata</taxon>
        <taxon>Craniata</taxon>
        <taxon>Vertebrata</taxon>
        <taxon>Euteleostomi</taxon>
        <taxon>Mammalia</taxon>
        <taxon>Eutheria</taxon>
        <taxon>Euarchontoglires</taxon>
        <taxon>Glires</taxon>
        <taxon>Rodentia</taxon>
        <taxon>Myomorpha</taxon>
        <taxon>Muroidea</taxon>
        <taxon>Muridae</taxon>
        <taxon>Murinae</taxon>
        <taxon>Rattus</taxon>
    </lineage>
</organism>
<keyword id="KW-0025">Alternative splicing</keyword>
<keyword id="KW-0067">ATP-binding</keyword>
<keyword id="KW-0115">cAMP biosynthesis</keyword>
<keyword id="KW-1003">Cell membrane</keyword>
<keyword id="KW-0966">Cell projection</keyword>
<keyword id="KW-0168">Coated pit</keyword>
<keyword id="KW-0968">Cytoplasmic vesicle</keyword>
<keyword id="KW-0325">Glycoprotein</keyword>
<keyword id="KW-0456">Lyase</keyword>
<keyword id="KW-0460">Magnesium</keyword>
<keyword id="KW-0464">Manganese</keyword>
<keyword id="KW-0472">Membrane</keyword>
<keyword id="KW-0479">Metal-binding</keyword>
<keyword id="KW-0488">Methylation</keyword>
<keyword id="KW-0547">Nucleotide-binding</keyword>
<keyword id="KW-0597">Phosphoprotein</keyword>
<keyword id="KW-1185">Reference proteome</keyword>
<keyword id="KW-0677">Repeat</keyword>
<keyword id="KW-0770">Synapse</keyword>
<keyword id="KW-0812">Transmembrane</keyword>
<keyword id="KW-1133">Transmembrane helix</keyword>
<evidence type="ECO:0000250" key="1">
    <source>
        <dbReference type="UniProtKB" id="P26769"/>
    </source>
</evidence>
<evidence type="ECO:0000250" key="2">
    <source>
        <dbReference type="UniProtKB" id="P30803"/>
    </source>
</evidence>
<evidence type="ECO:0000250" key="3">
    <source>
        <dbReference type="UniProtKB" id="P40145"/>
    </source>
</evidence>
<evidence type="ECO:0000250" key="4">
    <source>
        <dbReference type="UniProtKB" id="P97490"/>
    </source>
</evidence>
<evidence type="ECO:0000255" key="5"/>
<evidence type="ECO:0000255" key="6">
    <source>
        <dbReference type="PROSITE-ProRule" id="PRU00099"/>
    </source>
</evidence>
<evidence type="ECO:0000256" key="7">
    <source>
        <dbReference type="SAM" id="MobiDB-lite"/>
    </source>
</evidence>
<evidence type="ECO:0000269" key="8">
    <source>
    </source>
</evidence>
<evidence type="ECO:0000269" key="9">
    <source>
    </source>
</evidence>
<evidence type="ECO:0000269" key="10">
    <source>
    </source>
</evidence>
<evidence type="ECO:0000269" key="11">
    <source>
    </source>
</evidence>
<evidence type="ECO:0000269" key="12">
    <source>
    </source>
</evidence>
<evidence type="ECO:0000269" key="13">
    <source>
    </source>
</evidence>
<evidence type="ECO:0000269" key="14">
    <source>
    </source>
</evidence>
<evidence type="ECO:0000269" key="15">
    <source>
    </source>
</evidence>
<evidence type="ECO:0000269" key="16">
    <source>
    </source>
</evidence>
<evidence type="ECO:0000269" key="17">
    <source>
    </source>
</evidence>
<evidence type="ECO:0000269" key="18">
    <source>
    </source>
</evidence>
<evidence type="ECO:0000269" key="19">
    <source>
    </source>
</evidence>
<evidence type="ECO:0000269" key="20">
    <source>
    </source>
</evidence>
<evidence type="ECO:0000269" key="21">
    <source>
    </source>
</evidence>
<evidence type="ECO:0000269" key="22">
    <source>
    </source>
</evidence>
<evidence type="ECO:0000269" key="23">
    <source>
    </source>
</evidence>
<evidence type="ECO:0000269" key="24">
    <source>
    </source>
</evidence>
<evidence type="ECO:0000269" key="25">
    <source>
    </source>
</evidence>
<evidence type="ECO:0000269" key="26">
    <source>
    </source>
</evidence>
<evidence type="ECO:0000303" key="27">
    <source>
    </source>
</evidence>
<evidence type="ECO:0000303" key="28">
    <source>
    </source>
</evidence>
<evidence type="ECO:0000303" key="29">
    <source>
    </source>
</evidence>
<evidence type="ECO:0000305" key="30"/>
<evidence type="ECO:0000312" key="31">
    <source>
        <dbReference type="RGD" id="2036"/>
    </source>
</evidence>
<evidence type="ECO:0007744" key="32">
    <source>
    </source>
</evidence>
<comment type="function">
    <text evidence="10 13 18 21 23 24 25">Catalyzes the formation of cAMP in response to calcium entry leadings to cAMP signaling activation that affect processes suche as synaptic plasticity and insulin secretion (PubMed:13680124, PubMed:21046358, PubMed:22494970, PubMed:24086669, PubMed:25381556, PubMed:8163524). Plays a role in many brain functions, such as learning, memory, drug addiction, and anxiety modulation through regulation of synaptic plasticity by modulating long-term memory and long-term potentiation (LTP) through CREB transcription factor activity modulation (PubMed:8163524). Plays a central role in insulin secretion by controlling glucose homeostasis through glucagon-like peptide 1 and glucose signaling pathway and maintains insulin secretion through calcium-dependent PKA activation leading to vesicle pool replenishment (PubMed:13680124, PubMed:21046358, PubMed:25381556). Also, allows PTGER3 to induce potentiation of PTGER4-mediated PLA2 secretion by switching from a negative to a positive regulation, during the IL1B induced-dedifferentiation of smooth muscle cells (PubMed:16741924).</text>
</comment>
<comment type="catalytic activity">
    <reaction evidence="25 26">
        <text>ATP = 3',5'-cyclic AMP + diphosphate</text>
        <dbReference type="Rhea" id="RHEA:15389"/>
        <dbReference type="ChEBI" id="CHEBI:30616"/>
        <dbReference type="ChEBI" id="CHEBI:33019"/>
        <dbReference type="ChEBI" id="CHEBI:58165"/>
        <dbReference type="EC" id="4.6.1.1"/>
    </reaction>
</comment>
<comment type="cofactor">
    <cofactor evidence="26">
        <name>Mg(2+)</name>
        <dbReference type="ChEBI" id="CHEBI:18420"/>
    </cofactor>
    <cofactor evidence="26">
        <name>Mn(2+)</name>
        <dbReference type="ChEBI" id="CHEBI:29035"/>
    </cofactor>
    <text evidence="2">Binds 2 magnesium ions per subunit. Is also active with manganese (in vitro).</text>
</comment>
<comment type="activity regulation">
    <text evidence="8 10 11 14 15 16 17 19 21 22 23 24 25 26">At rest, the N- and C-terminal domains interact, as part of a larger autoinhibitory complex, with calmodulin pre-associated at the N-terminal domain. Upon a calcium rise, calmodulin becomes calcium-saturated and subsequently binds to the C-terminal domain. Fully calcium-saturated calmodulin then leaves the N-terminal domain, binding solely to the C-terminal domain, and the whole autoinhibitory complex dissociates, resulting in activation of adenylate cyclase. As local calcium concentrations decrease, the calmodulin becomes calcium free and binds once more to the N-terminal domain, whereupon the whole system returns to rest with the re-association of the autoinhibitory complex (PubMed:19305019, PubMed:8163524, PubMed:8557635). In non-excitable cells, activated by capacitative calcium entry (CCE) through store-operated channels, namely through interaction with ORAI1 and STIM1; membrane raft and caveolae localization and membrane integrity are indispensable (PubMed:11744699, PubMed:19158400, PubMed:19171672, PubMed:20410303, PubMed:22494970). CCE-mediated adenylate cyclase activity is decreased by AKAP5 and AKAP7. CCE-mediated adenylate cyclase activity is up-regulated by AKAP9 and the mitochondrially targeted AKAP1 (PubMed:20410303). In excitable cells, activated during membrane depolarization through L-type voltage-gated calcium channels (VGCC), leading to calcium entry; the L-type alpha subunit is sufficient (PubMed:24086669, PubMed:25381556). Activated via stimulation of the GLP1R (PubMed:25381556). Synergistically activated by calcium/calmodulin and GNAS (PubMed:13680124). Stimulated by forskolin (PubMed:13680124, PubMed:16186630). Inhibited by PKA directly bound to AKAP5 at membrane raft (PubMed:21771783, PubMed:22976297). Inhibition by acute activation of OPRM1 and activation by chronic activation of OPRM1 is mediated by pertussis toxin-sensitive G(i) and G(o) G alpha proteins and G beta-gamma dimer. Activity is inhibited by G beta-gamma dimer (PubMed:16186630).</text>
</comment>
<comment type="biophysicochemical properties">
    <kinetics>
        <KM evidence="26">0.18 mM for ATP (in the presence of 5.74 mM free Mg(2+) and 1 muM exogenous calmodulin) (isoform 1)</KM>
        <KM evidence="26">0.16 mM for ATP (in the presence of 5.74 mM free Mg(2+) and 1 muM exogenous calmodulin) (isoform 2)</KM>
        <KM evidence="26">2.1 mM for ATP (in the presence of 5.74 mM free Mg(2+) and 1 muM exogenous calmodulin) (isoform 3)</KM>
        <KM evidence="26">0.038 mM for ATP (in the presence of 0.23 mM free Mn(2+) and 1 muM exogenous calmodulin) (isoform 1)</KM>
        <KM evidence="26">0.025 mM for ATP (in the presence of 0.23 mM free Mn(2+) and 1 muM exogenous calmodulin) (isoform 2)</KM>
        <KM evidence="26">0.116 mM for ATP (in the presence of 0.23 mM free Mn(2+) and 1 muM exogenous calmodulin) (isoform 3)</KM>
        <Vmax evidence="26">7.4 nmol/min/mg enzyme (in the presence of 5.74 mM free Mg(2+) and 1 muM exogenous calmodulin) (isoform 1)</Vmax>
        <Vmax evidence="26">2.0 nmol/min/mg enzyme (in the presence of 5.74 mM free Mg(2+) and 1 muM exogenous calmodulin) (isoform 2)</Vmax>
        <Vmax evidence="26">1.5 nmol/min/mg enzyme (in the presence of 5.74 mM free Mg(2+) and 1 muM exogenous calmodulin) (isoform 3)</Vmax>
        <Vmax evidence="26">10.4 nmol/min/mg enzyme (in the presence of 0.23 mM free Mn(2+) and 1 muM exogenous calmodulin) (isoform 1)</Vmax>
        <Vmax evidence="26">3.5 nmol/min/mg enzyme (in the presence of 0.23 mM free Mn(2+) and 1 muM exogenous calmodulin) (isoform 2)</Vmax>
        <Vmax evidence="26">1.5 nmol/min/mg enzyme (in the presence of 0.23 mM free Mn(2+) and 1 muM exogenous calmodulin) (isoform 3)</Vmax>
    </kinetics>
</comment>
<comment type="subunit">
    <text evidence="9 12 14 16 17 19 20 21 22">Homodimer; via transmembrane domain (PubMed:11856299, PubMed:19158400). Monomer (PubMed:19158400). Heterodimer (PubMed:11856299). Oligemer; via transmembrane domain (PubMed:11856299). Interacts with PRKAR2A and AKAP5; inhibits adenylate cyclase activity through PKA phosphorylation (PubMed:22976297). Interacts with PPP2CA and PPP2R1A; does not mediate the inhibitory effects of PKA on adenylate cyclase activity; interaction is dependent of catalytically active PPP2CA; antagonizes interaction with calmodulin (PubMed:16258073, PubMed:22976297). Interacts with AKAP5 (palmitoylated form); promotes the phosphorylation of ADCY8 after store-operated calcium entry (SOCE) stimulation at membrane raft (PubMed:20410303, PubMed:21771783). Interacts with ORAI1; interaction is calcium store depletion independent; interaction occurs in membrane raft; interaction increases markedly after store depletion; positively regulates SOCE-induced adenylate cyclase activity; contributes to the targeting of ADCY8 to discrete regions of the plasma membrane that are shielded from other calcium events (PubMed:22494970). Interacts with STIM1 (PubMed:22494970). Interacts with actin; interaction is calcium independent; interaction is affected by calcium-calmodulin; interaction controls the distribution and regulation of ADCY8 (PubMed:22399809). Interacts with calmodulin; at rest, interacts via N-terminal domain; upon a calcium rise, calmodulin becomes calcium-saturated and subsequently binds to the C-terminal domain forming an autoinhibitory complex; fully calcium-saturated calmodulin leaves the N-terminal domain, binding solely to the C-terminal domain leading to dissociation of autoinhibitory complex and resulting in activation of adenylate cyclase; antagonizes interaction with PPP2CA; interaction is calcium dependent (PubMed:16258073, PubMed:19305019, PubMed:22399809). Interacts with PPP2R5D (PubMed:22976297).</text>
</comment>
<comment type="subcellular location">
    <subcellularLocation>
        <location evidence="15 18 25">Cell membrane</location>
        <topology>Multi-pass membrane protein</topology>
    </subcellularLocation>
    <subcellularLocation>
        <location evidence="12">Cell projection</location>
        <location evidence="12">Dendrite</location>
    </subcellularLocation>
    <subcellularLocation>
        <location evidence="12 14 15 21">Membrane raft</location>
    </subcellularLocation>
    <subcellularLocation>
        <location evidence="14">Membrane</location>
        <location evidence="14">Coated pit</location>
    </subcellularLocation>
    <subcellularLocation>
        <location evidence="14">Cytoplasmic vesicle</location>
        <location evidence="14">Clathrin-coated vesicle membrane</location>
    </subcellularLocation>
    <subcellularLocation>
        <location evidence="8">Membrane</location>
        <location evidence="8">Caveola</location>
    </subcellularLocation>
    <subcellularLocation>
        <location evidence="4">Basolateral cell membrane</location>
    </subcellularLocation>
    <subcellularLocation>
        <location evidence="4">Apical cell membrane</location>
    </subcellularLocation>
    <subcellularLocation>
        <location evidence="4">Synapse</location>
    </subcellularLocation>
    <subcellularLocation>
        <location evidence="4">Cell projection</location>
        <location evidence="4">Dendrite</location>
    </subcellularLocation>
    <subcellularLocation>
        <location evidence="4">Cell projection</location>
        <location evidence="4">Axon</location>
    </subcellularLocation>
    <subcellularLocation>
        <location evidence="4">Presynaptic cell membrane</location>
    </subcellularLocation>
    <subcellularLocation>
        <location evidence="4">Postsynaptic density</location>
    </subcellularLocation>
    <text evidence="4 14">Localized to dendritic arbors (By similarity). Monomeric N-glycosylated specieslocalized in membrane raft. In contrast, monomeric unglycosylated forms are enriched in clathrin-coated pits and vesicles. Dimers are also localized outside of membrane rafts. Membrane raft localization and integrity is indispensable for CCE-stimulated adenylate cyclase activity (PubMed:19158400).</text>
</comment>
<comment type="alternative products">
    <event type="alternative splicing"/>
    <isoform>
        <id>P40146-1</id>
        <name>1</name>
        <name evidence="29">VIII-A</name>
        <sequence type="displayed"/>
    </isoform>
    <isoform>
        <id>P40146-2</id>
        <name>2</name>
        <name evidence="29">VIII-B</name>
        <sequence type="described" ref="VSP_059987"/>
    </isoform>
    <isoform>
        <id>P40146-3</id>
        <name>3</name>
        <name evidence="29">VIII-c</name>
        <sequence type="described" ref="VSP_059986"/>
    </isoform>
    <isoform>
        <id>P40146-4</id>
        <name>4</name>
        <name evidence="27">VIII-D</name>
        <sequence type="described" ref="VSP_059986 VSP_059987"/>
    </isoform>
</comment>
<comment type="tissue specificity">
    <text evidence="10 26">Brain (PubMed:13680124, PubMed:8557635). Expressed in insulin-producing cells (PubMed:13680124).</text>
</comment>
<comment type="induction">
    <text evidence="13 18">Reduces by glucose (PubMed:21046358). Up-regulated during vascular smooth muscle cell de-differentiation by IL1B (PubMed:16741924).</text>
</comment>
<comment type="domain">
    <text evidence="1 9 16">The protein contains two modules with six transmembrane helices each; both are required for catalytic activity. Isolated N-terminal or C-terminal guanylate cyclase domains have no catalytic activity, but when they are brought together, enzyme activity is restored. The active site is at the interface of the two domains. Both contribute substrate-binding residues, but the catalytic metal ions are bound exclusively via the N-terminal guanylate cyclase domain. The two transmembrane clusters are necessary and suficient for the plasma membrane targeting and oligomers assembly (PubMed:11856299). The N-terminal and C-terminal domains interact at rest as part of a larger autoinhibitory complex, with calmodulin pre-associated at the N-terminal domain; the binding is specifically inhibited by fully calcium-saturated calmodulin, resulting in activation of AC8 (PubMed:19305019).</text>
</comment>
<comment type="PTM">
    <text evidence="19 22">Phosphorylated by PKA; mediates inhibition of adenylate cyclase activity at membrane raft; does not influence either CALM1 or PPP2CA interaction with ADCY8.</text>
</comment>
<comment type="PTM">
    <molecule>Isoform 1</molecule>
    <text evidence="14 26">N-glycosylated; N-glycosylation is responsible for raft-targeting; is not necessary for CCE-stimulated adenylate cyclase activity.</text>
</comment>
<comment type="PTM">
    <molecule>Isoform 3</molecule>
    <text evidence="14 26">N-glycosylated; N-glycosylation is responsible for raft-targeting; is not necessary for CCE-stimulated adenylate cyclase activity.</text>
</comment>
<comment type="miscellaneous">
    <molecule>Isoform 3</molecule>
    <text evidence="26">EC50 is approximately 4 times more sensitive to stimulation by calcium/calmodulin than isoform 1 and 2.</text>
</comment>
<comment type="similarity">
    <text evidence="6">Belongs to the adenylyl cyclase class-4/guanylyl cyclase family.</text>
</comment>
<reference key="1">
    <citation type="journal article" date="1994" name="J. Biol. Chem.">
        <title>Type VIII adenylyl cyclase. A Ca2+/calmodulin-stimulated enzyme expressed in discrete regions of rat brain.</title>
        <authorList>
            <person name="Cali J.J."/>
            <person name="Zwaagstra J.C."/>
            <person name="Mons N."/>
            <person name="Cooper D.M."/>
            <person name="Krupinski J."/>
        </authorList>
    </citation>
    <scope>NUCLEOTIDE SEQUENCE [MRNA] (ISOFORM 1)</scope>
    <scope>FUNCTION</scope>
    <scope>CATALYTIC ACTIVITY</scope>
    <scope>SUBCELLULAR LOCATION</scope>
    <scope>ACTIVITY REGULATION</scope>
    <source>
        <strain>Sprague-Dawley</strain>
        <tissue>Brain</tissue>
    </source>
</reference>
<reference key="2">
    <citation type="journal article" date="1996" name="J. Biol. Chem.">
        <title>Splice variants of type VIII adenylyl cyclase. Differences in glycosylation and regulation by Ca2+/calmodulin.</title>
        <authorList>
            <person name="Cali J.J."/>
            <person name="Parekh R.S."/>
            <person name="Krupinski J."/>
        </authorList>
    </citation>
    <scope>NUCLEOTIDE SEQUENCE [MRNA] (ISOFORMS 1; 2 AND 3)</scope>
    <scope>TISSUE SPECIFICITY</scope>
    <scope>GLYCOSYLATION (ISOFORMS 1 AND 3)</scope>
    <scope>ACTIVITY REGULATION</scope>
    <scope>CATALYTIC ACTIVITY</scope>
    <scope>BIOPHYSICOCHEMICAL PROPERTIES</scope>
    <scope>COFACTOR</scope>
</reference>
<reference key="3">
    <citation type="journal article" date="2002" name="Eur. J. Biochem.">
        <title>Dimerization of mammalian adenylate cyclases.</title>
        <authorList>
            <person name="Gu C."/>
            <person name="Cali J.J."/>
            <person name="Cooper D.M."/>
        </authorList>
    </citation>
    <scope>SUBUNIT</scope>
    <scope>DOMAIN</scope>
</reference>
<reference key="4">
    <citation type="journal article" date="2002" name="J. Biol. Chem.">
        <title>Residence of adenylyl cyclase type 8 in caveolae is necessary but not sufficient for regulation by capacitative Ca(2+) entry.</title>
        <authorList>
            <person name="Smith K.E."/>
            <person name="Gu C."/>
            <person name="Fagan K.A."/>
            <person name="Hu B."/>
            <person name="Cooper D.M."/>
        </authorList>
    </citation>
    <scope>MUTAGENESIS OF 38-TRP--THR-40 AND 49-ARG--ILE-51</scope>
    <scope>ACTIVITY REGULATION</scope>
    <scope>SUBCELLULAR LOCATION</scope>
</reference>
<reference key="5">
    <citation type="journal article" date="2003" name="Diabetologia">
        <title>Type VIII adenylyl cyclase in rat beta cells: coincidence signal detector/generator for glucose and GLP-1.</title>
        <authorList>
            <person name="Delmeire D."/>
            <person name="Flamez D."/>
            <person name="Hinke S.A."/>
            <person name="Cali J.J."/>
            <person name="Pipeleers D."/>
            <person name="Schuit F."/>
        </authorList>
    </citation>
    <scope>ACTIVITY REGULATION</scope>
    <scope>FUNCTION</scope>
    <scope>TISSUE SPECIFICITY</scope>
    <scope>ALTERNATIVE SPLICING (ISOFORM 4)</scope>
</reference>
<reference key="6">
    <citation type="journal article" date="2005" name="J. Mol. Neurosci.">
        <title>Inhibition and superactivation of the calcium-stimulated isoforms of adenylyl cyclase: role of Gbetagamma dimers.</title>
        <authorList>
            <person name="Steiner D."/>
            <person name="Avidor-Reiss T."/>
            <person name="Schallmach E."/>
            <person name="Saya D."/>
            <person name="Vogel Z."/>
        </authorList>
    </citation>
    <scope>ACTIVITY REGULATION</scope>
</reference>
<reference key="7">
    <citation type="journal article" date="2006" name="J. Cell. Physiol.">
        <title>PGE2 amplifies the effects of IL-1beta on vascular smooth muscle cell de-differentiation: a consequence of the versatility of PGE2 receptors 3 due to the emerging expression of adenylyl cyclase 8.</title>
        <authorList>
            <person name="Clement N."/>
            <person name="Glorian M."/>
            <person name="Raymondjean M."/>
            <person name="Andreani M."/>
            <person name="Limon I."/>
        </authorList>
    </citation>
    <scope>INDUCTION</scope>
    <scope>FUNCTION</scope>
</reference>
<reference key="8">
    <citation type="journal article" date="2006" name="Mol. Pharmacol.">
        <title>A direct interaction between the N terminus of adenylyl cyclase AC8 and the catalytic subunit of protein phosphatase 2A.</title>
        <authorList>
            <person name="Crossthwaite A.J."/>
            <person name="Ciruela A."/>
            <person name="Rayner T.F."/>
            <person name="Cooper D.M."/>
        </authorList>
    </citation>
    <scope>INTERACTION WITH PPP2CA; CALM1 AND PPP2R1A</scope>
    <scope>REGION</scope>
    <scope>MUTAGENESIS OF 38-TRP--THR-40 AND 49-ARG--ILE-51</scope>
    <scope>SUBCELLULAR LOCATION</scope>
    <scope>MOTIF</scope>
</reference>
<reference key="9">
    <citation type="journal article" date="2009" name="Am. J. Physiol.">
        <title>Insights into the residence in lipid rafts of adenylyl cyclase AC8 and its regulation by capacitative calcium entry.</title>
        <authorList>
            <person name="Pagano M."/>
            <person name="Clynes M.A."/>
            <person name="Masada N."/>
            <person name="Ciruela A."/>
            <person name="Ayling L.J."/>
            <person name="Wachten S."/>
            <person name="Cooper D.M."/>
        </authorList>
    </citation>
    <scope>SUBUNIT</scope>
    <scope>GLYCOSYLATION</scope>
    <scope>MUTAGENESIS OF LEU-432; LEU-439; LEU-446; LEU-453; ASN-814; ASN-818 AND ASN-885</scope>
    <scope>ACTIVITY REGULATION</scope>
    <scope>SUBCELLULAR LOCATION</scope>
</reference>
<reference key="10">
    <citation type="journal article" date="2009" name="J. Biol. Chem.">
        <title>Separate elements within a single IQ-like motif in adenylyl cyclase type 8 impart ca2+/calmodulin binding and autoinhibition.</title>
        <authorList>
            <person name="Macdougall D.A."/>
            <person name="Wachten S."/>
            <person name="Ciruela A."/>
            <person name="Sinz A."/>
            <person name="Cooper D.M."/>
        </authorList>
    </citation>
    <scope>REGION</scope>
    <scope>MUTAGENESIS OF 38-TRP--THR-40; 49-ARG--ILE-51; LEU-1196; VAL-1197; GLN-1198; SER-1199; LEU-1200; ARG-1202; ARG-1204; LYS-1206; LEU-1208 AND LEU-1209</scope>
    <scope>ACTIVITY REGULATION</scope>
    <scope>SITE</scope>
    <scope>DOMAIN</scope>
    <scope>INTERACTION WITH CALMODULIN</scope>
</reference>
<reference key="11">
    <citation type="journal article" date="2009" name="Mol. Pharmacol.">
        <title>Capacitative Ca2+ entry via Orai1 and stromal interacting molecule 1 (STIM1) regulates adenylyl cyclase type 8.</title>
        <authorList>
            <person name="Martin A.C."/>
            <person name="Willoughby D."/>
            <person name="Ciruela A."/>
            <person name="Ayling L.J."/>
            <person name="Pagano M."/>
            <person name="Wachten S."/>
            <person name="Tengholm A."/>
            <person name="Cooper D.M."/>
        </authorList>
    </citation>
    <scope>SUBCELLULAR LOCATION</scope>
    <scope>ACTIVITY REGULATION</scope>
</reference>
<reference key="12">
    <citation type="journal article" date="2010" name="J. Biol. Chem.">
        <title>AKAP79/150 interacts with AC8 and regulates Ca2+-dependent cAMP synthesis in pancreatic and neuronal systems.</title>
        <authorList>
            <person name="Willoughby D."/>
            <person name="Masada N."/>
            <person name="Wachten S."/>
            <person name="Pagano M."/>
            <person name="Halls M.L."/>
            <person name="Everett K.L."/>
            <person name="Ciruela A."/>
            <person name="Cooper D.M."/>
        </authorList>
    </citation>
    <scope>INTERACTION WITH AKAP5</scope>
    <scope>ACTIVITY REGULATION</scope>
</reference>
<reference key="13">
    <citation type="journal article" date="2011" name="Diabetologia">
        <title>Adenylyl cyclase 8 is central to glucagon-like peptide 1 signalling and effects of chronically elevated glucose in rat and human pancreatic beta cells.</title>
        <authorList>
            <person name="Roger B."/>
            <person name="Papin J."/>
            <person name="Vacher P."/>
            <person name="Raoux M."/>
            <person name="Mulot A."/>
            <person name="Dubois M."/>
            <person name="Kerr-Conte J."/>
            <person name="Voy B.H."/>
            <person name="Pattou F."/>
            <person name="Charpentier G."/>
            <person name="Jonas J.C."/>
            <person name="Moustaid-Moussa N."/>
            <person name="Lang J."/>
        </authorList>
    </citation>
    <scope>INDUCTION</scope>
    <scope>FUNCTION</scope>
    <scope>SUBCELLULAR LOCATION</scope>
</reference>
<reference key="14">
    <citation type="journal article" date="2011" name="J. Biol. Chem.">
        <title>Palmitoylation targets AKAP79 protein to lipid rafts and promotes its regulation of calcium-sensitive adenylyl cyclase type 8.</title>
        <authorList>
            <person name="Delint-Ramirez I."/>
            <person name="Willoughby D."/>
            <person name="Hammond G.V."/>
            <person name="Ayling L.J."/>
            <person name="Cooper D.M."/>
        </authorList>
    </citation>
    <scope>INTERACTION WITH AKAP5</scope>
    <scope>PHOSPHORYLATION</scope>
    <scope>ACTIVITY REGULATION</scope>
</reference>
<reference key="15">
    <citation type="journal article" date="2012" name="J. Cell Sci.">
        <title>Adenylyl cyclase AC8 directly controls its micro-environment by recruiting the actin cytoskeleton in a cholesterol-rich milieu.</title>
        <authorList>
            <person name="Ayling L.J."/>
            <person name="Briddon S.J."/>
            <person name="Halls M.L."/>
            <person name="Hammond G.R."/>
            <person name="Vaca L."/>
            <person name="Pacheco J."/>
            <person name="Hill S.J."/>
            <person name="Cooper D.M."/>
        </authorList>
    </citation>
    <scope>MUTAGENESIS OF 1-MET--PHE-106 AND ASP-416</scope>
    <scope>INTERACTION WITH ACTIN AND CALM1</scope>
</reference>
<reference key="16">
    <citation type="journal article" date="2012" name="J. Cell Sci.">
        <title>A key phosphorylation site in AC8 mediates regulation of Ca(2+)-dependent cAMP dynamics by an AC8-AKAP79-PKA signalling complex.</title>
        <authorList>
            <person name="Willoughby D."/>
            <person name="Halls M.L."/>
            <person name="Everett K.L."/>
            <person name="Ciruela A."/>
            <person name="Skroblin P."/>
            <person name="Klussmann E."/>
            <person name="Cooper D.M."/>
        </authorList>
    </citation>
    <scope>ACTIVITY REGULATION</scope>
    <scope>INTERACTION WITH PRKAR2A; PPP2CA; PPP2R5D AND AKAP5</scope>
    <scope>REGION</scope>
    <scope>MUTAGENESIS OF SER-66; SER-112; SER-178; SER-611; SER-852 AND SER-1120</scope>
    <scope>PHOSPHORYLATION</scope>
</reference>
<reference key="17">
    <citation type="journal article" date="2012" name="Nat. Commun.">
        <title>Quantitative maps of protein phosphorylation sites across 14 different rat organs and tissues.</title>
        <authorList>
            <person name="Lundby A."/>
            <person name="Secher A."/>
            <person name="Lage K."/>
            <person name="Nordsborg N.B."/>
            <person name="Dmytriyev A."/>
            <person name="Lundby C."/>
            <person name="Olsen J.V."/>
        </authorList>
    </citation>
    <scope>PHOSPHORYLATION [LARGE SCALE ANALYSIS] AT SER-621</scope>
    <scope>IDENTIFICATION BY MASS SPECTROMETRY [LARGE SCALE ANALYSIS]</scope>
</reference>
<reference key="18">
    <citation type="journal article" date="2012" name="Sci. Signal.">
        <title>Direct binding between Orai1 and AC8 mediates dynamic interplay between Ca2+ and cAMP signaling.</title>
        <authorList>
            <person name="Willoughby D."/>
            <person name="Everett K.L."/>
            <person name="Halls M.L."/>
            <person name="Pacheco J."/>
            <person name="Skroblin P."/>
            <person name="Vaca L."/>
            <person name="Klussmann E."/>
            <person name="Cooper D.M."/>
        </authorList>
    </citation>
    <scope>INTERACTION WITH ORAI1 AND STIM1</scope>
    <scope>REGION</scope>
    <scope>SUBCELLULAR LOCATION</scope>
    <scope>FUNCTION</scope>
    <scope>ACTIVITY REGULATION</scope>
</reference>
<reference key="19">
    <citation type="journal article" date="2013" name="PLoS ONE">
        <title>An improved targeted cAMP sensor to study the regulation of adenylyl cyclase 8 by Ca2+ entry through voltage-gated channels.</title>
        <authorList>
            <person name="Everett K.L."/>
            <person name="Cooper D.M."/>
        </authorList>
    </citation>
    <scope>ACTIVITY REGULATION</scope>
    <scope>FUNCTION</scope>
</reference>
<reference key="20">
    <citation type="journal article" date="2015" name="Diabetologia">
        <title>Calcium influx activates adenylyl cyclase 8 for sustained insulin secretion in rat pancreatic beta cells.</title>
        <authorList>
            <person name="Dou H."/>
            <person name="Wang C."/>
            <person name="Wu X."/>
            <person name="Yao L."/>
            <person name="Zhang X."/>
            <person name="Teng S."/>
            <person name="Xu H."/>
            <person name="Liu B."/>
            <person name="Wu Q."/>
            <person name="Zhang Q."/>
            <person name="Hu M."/>
            <person name="Wang Y."/>
            <person name="Wang L."/>
            <person name="Wu Y."/>
            <person name="Shang S."/>
            <person name="Kang X."/>
            <person name="Zheng L."/>
            <person name="Zhang J."/>
            <person name="Raoux M."/>
            <person name="Lang J."/>
            <person name="Li Q."/>
            <person name="Su J."/>
            <person name="Yu X."/>
            <person name="Chen L."/>
            <person name="Zhou Z."/>
        </authorList>
    </citation>
    <scope>FUNCTION</scope>
    <scope>ACTIVITY REGULATION</scope>
</reference>
<accession>P40146</accession>